<sequence length="42" mass="4633">MMYPKNLPAGADTLIGMVGAISLTVMMILFFIAIVWFLQGTR</sequence>
<name>Y010_HIS1I</name>
<gene>
    <name type="ORF">ORF10</name>
</gene>
<dbReference type="EMBL" id="AF191796">
    <property type="protein sequence ID" value="AAQ13727.1"/>
    <property type="molecule type" value="Genomic_DNA"/>
</dbReference>
<dbReference type="RefSeq" id="YP_529522.1">
    <property type="nucleotide sequence ID" value="NC_007914.1"/>
</dbReference>
<dbReference type="SMR" id="Q25BI5"/>
<dbReference type="KEGG" id="vg:5142387"/>
<dbReference type="Proteomes" id="UP000007024">
    <property type="component" value="Segment"/>
</dbReference>
<dbReference type="GO" id="GO:0033644">
    <property type="term" value="C:host cell membrane"/>
    <property type="evidence" value="ECO:0007669"/>
    <property type="project" value="UniProtKB-SubCell"/>
</dbReference>
<dbReference type="GO" id="GO:0016020">
    <property type="term" value="C:membrane"/>
    <property type="evidence" value="ECO:0007669"/>
    <property type="project" value="UniProtKB-KW"/>
</dbReference>
<reference key="1">
    <citation type="journal article" date="2006" name="Virology">
        <title>His1 and His2 are distantly related, spindle-shaped haloviruses belonging to the novel virus group, Salterprovirus.</title>
        <authorList>
            <person name="Bath C."/>
            <person name="Cukalac T."/>
            <person name="Porter K."/>
            <person name="Dyall-Smith M.L."/>
        </authorList>
    </citation>
    <scope>NUCLEOTIDE SEQUENCE [GENOMIC DNA]</scope>
</reference>
<feature type="chain" id="PRO_0000384879" description="Uncharacterized protein ORF10">
    <location>
        <begin position="1"/>
        <end position="42"/>
    </location>
</feature>
<feature type="transmembrane region" description="Helical" evidence="1">
    <location>
        <begin position="18"/>
        <end position="38"/>
    </location>
</feature>
<protein>
    <recommendedName>
        <fullName>Uncharacterized protein ORF10</fullName>
    </recommendedName>
</protein>
<keyword id="KW-1043">Host membrane</keyword>
<keyword id="KW-0472">Membrane</keyword>
<keyword id="KW-1185">Reference proteome</keyword>
<keyword id="KW-0812">Transmembrane</keyword>
<keyword id="KW-1133">Transmembrane helix</keyword>
<proteinExistence type="predicted"/>
<accession>Q25BI5</accession>
<organism>
    <name type="scientific">His1 virus (isolate Australia/Victoria)</name>
    <name type="common">His1V</name>
    <name type="synonym">Haloarcula hispanica virus 1</name>
    <dbReference type="NCBI Taxonomy" id="654912"/>
    <lineage>
        <taxon>Viruses</taxon>
        <taxon>Viruses incertae sedis</taxon>
        <taxon>Halspiviridae</taxon>
        <taxon>Salterprovirus</taxon>
        <taxon>Salterprovirus His1</taxon>
    </lineage>
</organism>
<evidence type="ECO:0000255" key="1"/>
<evidence type="ECO:0000305" key="2"/>
<organismHost>
    <name type="scientific">Haloarcula hispanica</name>
    <dbReference type="NCBI Taxonomy" id="51589"/>
</organismHost>
<comment type="subcellular location">
    <subcellularLocation>
        <location evidence="2">Host membrane</location>
        <topology evidence="2">Single-pass membrane protein</topology>
    </subcellularLocation>
</comment>